<name>C3H51_ORYSJ</name>
<gene>
    <name type="ordered locus">Os07g0583300</name>
    <name type="ordered locus">LOC_Os07g39440</name>
    <name type="ORF">OJ1127_E01.106</name>
    <name type="ORF">OsJ_023926</name>
</gene>
<protein>
    <recommendedName>
        <fullName>Putative zinc finger CCCH domain-containing protein 51</fullName>
        <shortName>OsC3H51</shortName>
    </recommendedName>
</protein>
<accession>Q84ZT0</accession>
<accession>A3BLK4</accession>
<feature type="chain" id="PRO_0000346845" description="Putative zinc finger CCCH domain-containing protein 51">
    <location>
        <begin position="1"/>
        <end position="513"/>
    </location>
</feature>
<feature type="domain" description="HTH OST-type" evidence="3">
    <location>
        <begin position="218"/>
        <end position="299"/>
    </location>
</feature>
<feature type="domain" description="RRM" evidence="1">
    <location>
        <begin position="325"/>
        <end position="411"/>
    </location>
</feature>
<feature type="zinc finger region" description="C3H1-type" evidence="2">
    <location>
        <begin position="176"/>
        <end position="204"/>
    </location>
</feature>
<feature type="region of interest" description="Disordered" evidence="4">
    <location>
        <begin position="155"/>
        <end position="180"/>
    </location>
</feature>
<feature type="compositionally biased region" description="Low complexity" evidence="4">
    <location>
        <begin position="170"/>
        <end position="180"/>
    </location>
</feature>
<reference key="1">
    <citation type="journal article" date="2005" name="Nature">
        <title>The map-based sequence of the rice genome.</title>
        <authorList>
            <consortium name="International rice genome sequencing project (IRGSP)"/>
        </authorList>
    </citation>
    <scope>NUCLEOTIDE SEQUENCE [LARGE SCALE GENOMIC DNA]</scope>
    <source>
        <strain>cv. Nipponbare</strain>
    </source>
</reference>
<reference key="2">
    <citation type="journal article" date="2013" name="Rice">
        <title>Improvement of the Oryza sativa Nipponbare reference genome using next generation sequence and optical map data.</title>
        <authorList>
            <person name="Kawahara Y."/>
            <person name="de la Bastide M."/>
            <person name="Hamilton J.P."/>
            <person name="Kanamori H."/>
            <person name="McCombie W.R."/>
            <person name="Ouyang S."/>
            <person name="Schwartz D.C."/>
            <person name="Tanaka T."/>
            <person name="Wu J."/>
            <person name="Zhou S."/>
            <person name="Childs K.L."/>
            <person name="Davidson R.M."/>
            <person name="Lin H."/>
            <person name="Quesada-Ocampo L."/>
            <person name="Vaillancourt B."/>
            <person name="Sakai H."/>
            <person name="Lee S.S."/>
            <person name="Kim J."/>
            <person name="Numa H."/>
            <person name="Itoh T."/>
            <person name="Buell C.R."/>
            <person name="Matsumoto T."/>
        </authorList>
    </citation>
    <scope>GENOME REANNOTATION</scope>
    <source>
        <strain>cv. Nipponbare</strain>
    </source>
</reference>
<reference key="3">
    <citation type="journal article" date="2005" name="PLoS Biol.">
        <title>The genomes of Oryza sativa: a history of duplications.</title>
        <authorList>
            <person name="Yu J."/>
            <person name="Wang J."/>
            <person name="Lin W."/>
            <person name="Li S."/>
            <person name="Li H."/>
            <person name="Zhou J."/>
            <person name="Ni P."/>
            <person name="Dong W."/>
            <person name="Hu S."/>
            <person name="Zeng C."/>
            <person name="Zhang J."/>
            <person name="Zhang Y."/>
            <person name="Li R."/>
            <person name="Xu Z."/>
            <person name="Li S."/>
            <person name="Li X."/>
            <person name="Zheng H."/>
            <person name="Cong L."/>
            <person name="Lin L."/>
            <person name="Yin J."/>
            <person name="Geng J."/>
            <person name="Li G."/>
            <person name="Shi J."/>
            <person name="Liu J."/>
            <person name="Lv H."/>
            <person name="Li J."/>
            <person name="Wang J."/>
            <person name="Deng Y."/>
            <person name="Ran L."/>
            <person name="Shi X."/>
            <person name="Wang X."/>
            <person name="Wu Q."/>
            <person name="Li C."/>
            <person name="Ren X."/>
            <person name="Wang J."/>
            <person name="Wang X."/>
            <person name="Li D."/>
            <person name="Liu D."/>
            <person name="Zhang X."/>
            <person name="Ji Z."/>
            <person name="Zhao W."/>
            <person name="Sun Y."/>
            <person name="Zhang Z."/>
            <person name="Bao J."/>
            <person name="Han Y."/>
            <person name="Dong L."/>
            <person name="Ji J."/>
            <person name="Chen P."/>
            <person name="Wu S."/>
            <person name="Liu J."/>
            <person name="Xiao Y."/>
            <person name="Bu D."/>
            <person name="Tan J."/>
            <person name="Yang L."/>
            <person name="Ye C."/>
            <person name="Zhang J."/>
            <person name="Xu J."/>
            <person name="Zhou Y."/>
            <person name="Yu Y."/>
            <person name="Zhang B."/>
            <person name="Zhuang S."/>
            <person name="Wei H."/>
            <person name="Liu B."/>
            <person name="Lei M."/>
            <person name="Yu H."/>
            <person name="Li Y."/>
            <person name="Xu H."/>
            <person name="Wei S."/>
            <person name="He X."/>
            <person name="Fang L."/>
            <person name="Zhang Z."/>
            <person name="Zhang Y."/>
            <person name="Huang X."/>
            <person name="Su Z."/>
            <person name="Tong W."/>
            <person name="Li J."/>
            <person name="Tong Z."/>
            <person name="Li S."/>
            <person name="Ye J."/>
            <person name="Wang L."/>
            <person name="Fang L."/>
            <person name="Lei T."/>
            <person name="Chen C.-S."/>
            <person name="Chen H.-C."/>
            <person name="Xu Z."/>
            <person name="Li H."/>
            <person name="Huang H."/>
            <person name="Zhang F."/>
            <person name="Xu H."/>
            <person name="Li N."/>
            <person name="Zhao C."/>
            <person name="Li S."/>
            <person name="Dong L."/>
            <person name="Huang Y."/>
            <person name="Li L."/>
            <person name="Xi Y."/>
            <person name="Qi Q."/>
            <person name="Li W."/>
            <person name="Zhang B."/>
            <person name="Hu W."/>
            <person name="Zhang Y."/>
            <person name="Tian X."/>
            <person name="Jiao Y."/>
            <person name="Liang X."/>
            <person name="Jin J."/>
            <person name="Gao L."/>
            <person name="Zheng W."/>
            <person name="Hao B."/>
            <person name="Liu S.-M."/>
            <person name="Wang W."/>
            <person name="Yuan L."/>
            <person name="Cao M."/>
            <person name="McDermott J."/>
            <person name="Samudrala R."/>
            <person name="Wang J."/>
            <person name="Wong G.K.-S."/>
            <person name="Yang H."/>
        </authorList>
    </citation>
    <scope>NUCLEOTIDE SEQUENCE [LARGE SCALE GENOMIC DNA]</scope>
    <source>
        <strain>cv. Nipponbare</strain>
    </source>
</reference>
<reference key="4">
    <citation type="journal article" date="2008" name="BMC Genomics">
        <title>Genome-wide analysis of CCCH zinc finger family in Arabidopsis and rice.</title>
        <authorList>
            <person name="Wang D."/>
            <person name="Guo Y."/>
            <person name="Wu C."/>
            <person name="Yang G."/>
            <person name="Li Y."/>
            <person name="Zheng C."/>
        </authorList>
    </citation>
    <scope>NOMENCLATURE</scope>
</reference>
<organism>
    <name type="scientific">Oryza sativa subsp. japonica</name>
    <name type="common">Rice</name>
    <dbReference type="NCBI Taxonomy" id="39947"/>
    <lineage>
        <taxon>Eukaryota</taxon>
        <taxon>Viridiplantae</taxon>
        <taxon>Streptophyta</taxon>
        <taxon>Embryophyta</taxon>
        <taxon>Tracheophyta</taxon>
        <taxon>Spermatophyta</taxon>
        <taxon>Magnoliopsida</taxon>
        <taxon>Liliopsida</taxon>
        <taxon>Poales</taxon>
        <taxon>Poaceae</taxon>
        <taxon>BOP clade</taxon>
        <taxon>Oryzoideae</taxon>
        <taxon>Oryzeae</taxon>
        <taxon>Oryzinae</taxon>
        <taxon>Oryza</taxon>
        <taxon>Oryza sativa</taxon>
    </lineage>
</organism>
<dbReference type="EMBL" id="AP003747">
    <property type="protein sequence ID" value="BAC55605.1"/>
    <property type="molecule type" value="Genomic_DNA"/>
</dbReference>
<dbReference type="EMBL" id="AP014963">
    <property type="status" value="NOT_ANNOTATED_CDS"/>
    <property type="molecule type" value="Genomic_DNA"/>
</dbReference>
<dbReference type="EMBL" id="CM000144">
    <property type="protein sequence ID" value="EAZ40443.1"/>
    <property type="status" value="ALT_SEQ"/>
    <property type="molecule type" value="Genomic_DNA"/>
</dbReference>
<dbReference type="SMR" id="Q84ZT0"/>
<dbReference type="FunCoup" id="Q84ZT0">
    <property type="interactions" value="296"/>
</dbReference>
<dbReference type="STRING" id="39947.Q84ZT0"/>
<dbReference type="PaxDb" id="39947-Q84ZT0"/>
<dbReference type="eggNOG" id="ENOG502QS3A">
    <property type="taxonomic scope" value="Eukaryota"/>
</dbReference>
<dbReference type="HOGENOM" id="CLU_041383_0_0_1"/>
<dbReference type="InParanoid" id="Q84ZT0"/>
<dbReference type="Proteomes" id="UP000000763">
    <property type="component" value="Chromosome 7"/>
</dbReference>
<dbReference type="Proteomes" id="UP000007752">
    <property type="component" value="Chromosome 7"/>
</dbReference>
<dbReference type="Proteomes" id="UP000059680">
    <property type="component" value="Chromosome 7"/>
</dbReference>
<dbReference type="GO" id="GO:0003677">
    <property type="term" value="F:DNA binding"/>
    <property type="evidence" value="ECO:0007669"/>
    <property type="project" value="UniProtKB-KW"/>
</dbReference>
<dbReference type="GO" id="GO:0003723">
    <property type="term" value="F:RNA binding"/>
    <property type="evidence" value="ECO:0007669"/>
    <property type="project" value="UniProtKB-KW"/>
</dbReference>
<dbReference type="GO" id="GO:0008270">
    <property type="term" value="F:zinc ion binding"/>
    <property type="evidence" value="ECO:0007669"/>
    <property type="project" value="UniProtKB-KW"/>
</dbReference>
<dbReference type="FunFam" id="3.30.70.330:FF:000678">
    <property type="entry name" value="zinc finger CCCH domain-containing protein 53-like isoform X2"/>
    <property type="match status" value="1"/>
</dbReference>
<dbReference type="Gene3D" id="3.30.70.330">
    <property type="match status" value="1"/>
</dbReference>
<dbReference type="InterPro" id="IPR012677">
    <property type="entry name" value="Nucleotide-bd_a/b_plait_sf"/>
</dbReference>
<dbReference type="InterPro" id="IPR025605">
    <property type="entry name" value="OST-HTH/LOTUS_dom"/>
</dbReference>
<dbReference type="InterPro" id="IPR035979">
    <property type="entry name" value="RBD_domain_sf"/>
</dbReference>
<dbReference type="InterPro" id="IPR000504">
    <property type="entry name" value="RRM_dom"/>
</dbReference>
<dbReference type="InterPro" id="IPR000571">
    <property type="entry name" value="Znf_CCCH"/>
</dbReference>
<dbReference type="PANTHER" id="PTHR24009">
    <property type="entry name" value="RNA-BINDING (RRM/RBD/RNP MOTIFS)"/>
    <property type="match status" value="1"/>
</dbReference>
<dbReference type="PANTHER" id="PTHR24009:SF0">
    <property type="entry name" value="ZINC FINGER CCCH DOMAIN-CONTAINING PROTEIN 18"/>
    <property type="match status" value="1"/>
</dbReference>
<dbReference type="Pfam" id="PF00076">
    <property type="entry name" value="RRM_1"/>
    <property type="match status" value="1"/>
</dbReference>
<dbReference type="SMART" id="SM00360">
    <property type="entry name" value="RRM"/>
    <property type="match status" value="1"/>
</dbReference>
<dbReference type="SUPFAM" id="SSF54928">
    <property type="entry name" value="RNA-binding domain, RBD"/>
    <property type="match status" value="1"/>
</dbReference>
<dbReference type="PROSITE" id="PS51644">
    <property type="entry name" value="HTH_OST"/>
    <property type="match status" value="1"/>
</dbReference>
<dbReference type="PROSITE" id="PS50102">
    <property type="entry name" value="RRM"/>
    <property type="match status" value="1"/>
</dbReference>
<dbReference type="PROSITE" id="PS50103">
    <property type="entry name" value="ZF_C3H1"/>
    <property type="match status" value="1"/>
</dbReference>
<evidence type="ECO:0000255" key="1">
    <source>
        <dbReference type="PROSITE-ProRule" id="PRU00176"/>
    </source>
</evidence>
<evidence type="ECO:0000255" key="2">
    <source>
        <dbReference type="PROSITE-ProRule" id="PRU00723"/>
    </source>
</evidence>
<evidence type="ECO:0000255" key="3">
    <source>
        <dbReference type="PROSITE-ProRule" id="PRU00975"/>
    </source>
</evidence>
<evidence type="ECO:0000256" key="4">
    <source>
        <dbReference type="SAM" id="MobiDB-lite"/>
    </source>
</evidence>
<evidence type="ECO:0000305" key="5"/>
<keyword id="KW-0238">DNA-binding</keyword>
<keyword id="KW-0479">Metal-binding</keyword>
<keyword id="KW-1185">Reference proteome</keyword>
<keyword id="KW-0694">RNA-binding</keyword>
<keyword id="KW-0862">Zinc</keyword>
<keyword id="KW-0863">Zinc-finger</keyword>
<sequence length="513" mass="58249">MVAFFLPGPRRDPRIRRTARQGMGFLVQHLLIMGSSRILKRNQEMAMNKCSVLLNRAREFEPSRANGGYILSTSSYPQIRQYAASPDEHLRSLPSLLPPPPGQELPLAYLRAQRQSSGNYRGIQAQRRPLIDQTGALQSSFPESICLKEELQSLSMPRNSPNAGRNLVGHPHSSSKSSSKPCHFHFFRGYCKKGVNCQFFHGSVPELHNPRQVHPFASLSKLDMEIRELLIGIPPPVAVDRLPSMYFEKYGKPLRPDGWLTESQQHGRTGCSLTSLLMGLNTIRVVEREHGQYHVVLVEDARKKYMDCLGLAHSCNLMDTGTGSNQIYMTFPVHSKFTDDDVENYFKQFGPVSGVRIPYQEKRMFGFVSFLYTETVRLILSKGTAHFICGLRVLVKRYMEKSELRMTWLKSVSGSQVDSCLKVTIGHTIAKAPSKKKKEVKEQCSKDQGPIKIYRKNKQFDYREHRTSGFGVTNEHYIGNNMKKKSHRSDDLDEASAYEDSDEIILPDSLGLY</sequence>
<proteinExistence type="predicted"/>
<comment type="sequence caution" evidence="5">
    <conflict type="erroneous gene model prediction">
        <sequence resource="EMBL-CDS" id="EAZ40443"/>
    </conflict>
</comment>